<evidence type="ECO:0000255" key="1">
    <source>
        <dbReference type="PROSITE-ProRule" id="PRU00042"/>
    </source>
</evidence>
<evidence type="ECO:0000255" key="2">
    <source>
        <dbReference type="PROSITE-ProRule" id="PRU00119"/>
    </source>
</evidence>
<evidence type="ECO:0000256" key="3">
    <source>
        <dbReference type="SAM" id="MobiDB-lite"/>
    </source>
</evidence>
<evidence type="ECO:0000269" key="4">
    <source>
    </source>
</evidence>
<evidence type="ECO:0000269" key="5">
    <source>
    </source>
</evidence>
<evidence type="ECO:0000269" key="6">
    <source>
    </source>
</evidence>
<evidence type="ECO:0000303" key="7">
    <source>
    </source>
</evidence>
<evidence type="ECO:0000303" key="8">
    <source>
    </source>
</evidence>
<evidence type="ECO:0000305" key="9"/>
<reference key="1">
    <citation type="journal article" date="2004" name="Biochim. Biophys. Acta">
        <title>Identification and functional analysis of a novel human KRAB/C2H2 zinc finger gene ZNF300.</title>
        <authorList>
            <person name="Gou D.-M."/>
            <person name="Wang J."/>
            <person name="Gao L."/>
            <person name="Sun Y."/>
            <person name="Peng X."/>
            <person name="Huang J."/>
            <person name="Li W.-X."/>
        </authorList>
    </citation>
    <scope>NUCLEOTIDE SEQUENCE [MRNA] (ISOFORM 1)</scope>
    <scope>FUNCTION</scope>
    <scope>SUBCELLULAR LOCATION</scope>
    <scope>TISSUE SPECIFICITY</scope>
</reference>
<reference key="2">
    <citation type="journal article" date="2007" name="DNA Seq.">
        <title>Molecular cloning and characterization of a novel splice variant of human ZNF300 gene, which expressed highly in testis.</title>
        <authorList>
            <person name="Cao Y."/>
            <person name="Li J.-X."/>
            <person name="Ji C.-N."/>
            <person name="Xu X.-W."/>
            <person name="Wu M."/>
        </authorList>
    </citation>
    <scope>NUCLEOTIDE SEQUENCE [MRNA] (ISOFORM 2)</scope>
    <scope>TISSUE SPECIFICITY</scope>
    <source>
        <tissue>Fetal brain</tissue>
    </source>
</reference>
<reference key="3">
    <citation type="journal article" date="2004" name="Nat. Genet.">
        <title>Complete sequencing and characterization of 21,243 full-length human cDNAs.</title>
        <authorList>
            <person name="Ota T."/>
            <person name="Suzuki Y."/>
            <person name="Nishikawa T."/>
            <person name="Otsuki T."/>
            <person name="Sugiyama T."/>
            <person name="Irie R."/>
            <person name="Wakamatsu A."/>
            <person name="Hayashi K."/>
            <person name="Sato H."/>
            <person name="Nagai K."/>
            <person name="Kimura K."/>
            <person name="Makita H."/>
            <person name="Sekine M."/>
            <person name="Obayashi M."/>
            <person name="Nishi T."/>
            <person name="Shibahara T."/>
            <person name="Tanaka T."/>
            <person name="Ishii S."/>
            <person name="Yamamoto J."/>
            <person name="Saito K."/>
            <person name="Kawai Y."/>
            <person name="Isono Y."/>
            <person name="Nakamura Y."/>
            <person name="Nagahari K."/>
            <person name="Murakami K."/>
            <person name="Yasuda T."/>
            <person name="Iwayanagi T."/>
            <person name="Wagatsuma M."/>
            <person name="Shiratori A."/>
            <person name="Sudo H."/>
            <person name="Hosoiri T."/>
            <person name="Kaku Y."/>
            <person name="Kodaira H."/>
            <person name="Kondo H."/>
            <person name="Sugawara M."/>
            <person name="Takahashi M."/>
            <person name="Kanda K."/>
            <person name="Yokoi T."/>
            <person name="Furuya T."/>
            <person name="Kikkawa E."/>
            <person name="Omura Y."/>
            <person name="Abe K."/>
            <person name="Kamihara K."/>
            <person name="Katsuta N."/>
            <person name="Sato K."/>
            <person name="Tanikawa M."/>
            <person name="Yamazaki M."/>
            <person name="Ninomiya K."/>
            <person name="Ishibashi T."/>
            <person name="Yamashita H."/>
            <person name="Murakawa K."/>
            <person name="Fujimori K."/>
            <person name="Tanai H."/>
            <person name="Kimata M."/>
            <person name="Watanabe M."/>
            <person name="Hiraoka S."/>
            <person name="Chiba Y."/>
            <person name="Ishida S."/>
            <person name="Ono Y."/>
            <person name="Takiguchi S."/>
            <person name="Watanabe S."/>
            <person name="Yosida M."/>
            <person name="Hotuta T."/>
            <person name="Kusano J."/>
            <person name="Kanehori K."/>
            <person name="Takahashi-Fujii A."/>
            <person name="Hara H."/>
            <person name="Tanase T.-O."/>
            <person name="Nomura Y."/>
            <person name="Togiya S."/>
            <person name="Komai F."/>
            <person name="Hara R."/>
            <person name="Takeuchi K."/>
            <person name="Arita M."/>
            <person name="Imose N."/>
            <person name="Musashino K."/>
            <person name="Yuuki H."/>
            <person name="Oshima A."/>
            <person name="Sasaki N."/>
            <person name="Aotsuka S."/>
            <person name="Yoshikawa Y."/>
            <person name="Matsunawa H."/>
            <person name="Ichihara T."/>
            <person name="Shiohata N."/>
            <person name="Sano S."/>
            <person name="Moriya S."/>
            <person name="Momiyama H."/>
            <person name="Satoh N."/>
            <person name="Takami S."/>
            <person name="Terashima Y."/>
            <person name="Suzuki O."/>
            <person name="Nakagawa S."/>
            <person name="Senoh A."/>
            <person name="Mizoguchi H."/>
            <person name="Goto Y."/>
            <person name="Shimizu F."/>
            <person name="Wakebe H."/>
            <person name="Hishigaki H."/>
            <person name="Watanabe T."/>
            <person name="Sugiyama A."/>
            <person name="Takemoto M."/>
            <person name="Kawakami B."/>
            <person name="Yamazaki M."/>
            <person name="Watanabe K."/>
            <person name="Kumagai A."/>
            <person name="Itakura S."/>
            <person name="Fukuzumi Y."/>
            <person name="Fujimori Y."/>
            <person name="Komiyama M."/>
            <person name="Tashiro H."/>
            <person name="Tanigami A."/>
            <person name="Fujiwara T."/>
            <person name="Ono T."/>
            <person name="Yamada K."/>
            <person name="Fujii Y."/>
            <person name="Ozaki K."/>
            <person name="Hirao M."/>
            <person name="Ohmori Y."/>
            <person name="Kawabata A."/>
            <person name="Hikiji T."/>
            <person name="Kobatake N."/>
            <person name="Inagaki H."/>
            <person name="Ikema Y."/>
            <person name="Okamoto S."/>
            <person name="Okitani R."/>
            <person name="Kawakami T."/>
            <person name="Noguchi S."/>
            <person name="Itoh T."/>
            <person name="Shigeta K."/>
            <person name="Senba T."/>
            <person name="Matsumura K."/>
            <person name="Nakajima Y."/>
            <person name="Mizuno T."/>
            <person name="Morinaga M."/>
            <person name="Sasaki M."/>
            <person name="Togashi T."/>
            <person name="Oyama M."/>
            <person name="Hata H."/>
            <person name="Watanabe M."/>
            <person name="Komatsu T."/>
            <person name="Mizushima-Sugano J."/>
            <person name="Satoh T."/>
            <person name="Shirai Y."/>
            <person name="Takahashi Y."/>
            <person name="Nakagawa K."/>
            <person name="Okumura K."/>
            <person name="Nagase T."/>
            <person name="Nomura N."/>
            <person name="Kikuchi H."/>
            <person name="Masuho Y."/>
            <person name="Yamashita R."/>
            <person name="Nakai K."/>
            <person name="Yada T."/>
            <person name="Nakamura Y."/>
            <person name="Ohara O."/>
            <person name="Isogai T."/>
            <person name="Sugano S."/>
        </authorList>
    </citation>
    <scope>NUCLEOTIDE SEQUENCE [LARGE SCALE MRNA] (ISOFORMS 1 AND 3)</scope>
    <scope>NUCLEOTIDE SEQUENCE [LARGE SCALE MRNA] OF 1-38 (ISOFORM 4)</scope>
    <source>
        <tissue>Brain</tissue>
        <tissue>Prostate</tissue>
        <tissue>Testis</tissue>
    </source>
</reference>
<reference key="4">
    <citation type="journal article" date="2004" name="Nature">
        <title>The DNA sequence and comparative analysis of human chromosome 5.</title>
        <authorList>
            <person name="Schmutz J."/>
            <person name="Martin J."/>
            <person name="Terry A."/>
            <person name="Couronne O."/>
            <person name="Grimwood J."/>
            <person name="Lowry S."/>
            <person name="Gordon L.A."/>
            <person name="Scott D."/>
            <person name="Xie G."/>
            <person name="Huang W."/>
            <person name="Hellsten U."/>
            <person name="Tran-Gyamfi M."/>
            <person name="She X."/>
            <person name="Prabhakar S."/>
            <person name="Aerts A."/>
            <person name="Altherr M."/>
            <person name="Bajorek E."/>
            <person name="Black S."/>
            <person name="Branscomb E."/>
            <person name="Caoile C."/>
            <person name="Challacombe J.F."/>
            <person name="Chan Y.M."/>
            <person name="Denys M."/>
            <person name="Detter J.C."/>
            <person name="Escobar J."/>
            <person name="Flowers D."/>
            <person name="Fotopulos D."/>
            <person name="Glavina T."/>
            <person name="Gomez M."/>
            <person name="Gonzales E."/>
            <person name="Goodstein D."/>
            <person name="Grigoriev I."/>
            <person name="Groza M."/>
            <person name="Hammon N."/>
            <person name="Hawkins T."/>
            <person name="Haydu L."/>
            <person name="Israni S."/>
            <person name="Jett J."/>
            <person name="Kadner K."/>
            <person name="Kimball H."/>
            <person name="Kobayashi A."/>
            <person name="Lopez F."/>
            <person name="Lou Y."/>
            <person name="Martinez D."/>
            <person name="Medina C."/>
            <person name="Morgan J."/>
            <person name="Nandkeshwar R."/>
            <person name="Noonan J.P."/>
            <person name="Pitluck S."/>
            <person name="Pollard M."/>
            <person name="Predki P."/>
            <person name="Priest J."/>
            <person name="Ramirez L."/>
            <person name="Retterer J."/>
            <person name="Rodriguez A."/>
            <person name="Rogers S."/>
            <person name="Salamov A."/>
            <person name="Salazar A."/>
            <person name="Thayer N."/>
            <person name="Tice H."/>
            <person name="Tsai M."/>
            <person name="Ustaszewska A."/>
            <person name="Vo N."/>
            <person name="Wheeler J."/>
            <person name="Wu K."/>
            <person name="Yang J."/>
            <person name="Dickson M."/>
            <person name="Cheng J.-F."/>
            <person name="Eichler E.E."/>
            <person name="Olsen A."/>
            <person name="Pennacchio L.A."/>
            <person name="Rokhsar D.S."/>
            <person name="Richardson P."/>
            <person name="Lucas S.M."/>
            <person name="Myers R.M."/>
            <person name="Rubin E.M."/>
        </authorList>
    </citation>
    <scope>NUCLEOTIDE SEQUENCE [LARGE SCALE GENOMIC DNA]</scope>
</reference>
<reference key="5">
    <citation type="submission" date="2005-09" db="EMBL/GenBank/DDBJ databases">
        <authorList>
            <person name="Mural R.J."/>
            <person name="Istrail S."/>
            <person name="Sutton G.G."/>
            <person name="Florea L."/>
            <person name="Halpern A.L."/>
            <person name="Mobarry C.M."/>
            <person name="Lippert R."/>
            <person name="Walenz B."/>
            <person name="Shatkay H."/>
            <person name="Dew I."/>
            <person name="Miller J.R."/>
            <person name="Flanigan M.J."/>
            <person name="Edwards N.J."/>
            <person name="Bolanos R."/>
            <person name="Fasulo D."/>
            <person name="Halldorsson B.V."/>
            <person name="Hannenhalli S."/>
            <person name="Turner R."/>
            <person name="Yooseph S."/>
            <person name="Lu F."/>
            <person name="Nusskern D.R."/>
            <person name="Shue B.C."/>
            <person name="Zheng X.H."/>
            <person name="Zhong F."/>
            <person name="Delcher A.L."/>
            <person name="Huson D.H."/>
            <person name="Kravitz S.A."/>
            <person name="Mouchard L."/>
            <person name="Reinert K."/>
            <person name="Remington K.A."/>
            <person name="Clark A.G."/>
            <person name="Waterman M.S."/>
            <person name="Eichler E.E."/>
            <person name="Adams M.D."/>
            <person name="Hunkapiller M.W."/>
            <person name="Myers E.W."/>
            <person name="Venter J.C."/>
        </authorList>
    </citation>
    <scope>NUCLEOTIDE SEQUENCE [LARGE SCALE GENOMIC DNA]</scope>
</reference>
<reference key="6">
    <citation type="journal article" date="2004" name="Genome Res.">
        <title>The status, quality, and expansion of the NIH full-length cDNA project: the Mammalian Gene Collection (MGC).</title>
        <authorList>
            <consortium name="The MGC Project Team"/>
        </authorList>
    </citation>
    <scope>NUCLEOTIDE SEQUENCE [LARGE SCALE MRNA] (ISOFORM 1)</scope>
    <source>
        <tissue>Brain</tissue>
    </source>
</reference>
<reference key="7">
    <citation type="journal article" date="2007" name="BMC Genomics">
        <title>The full-ORF clone resource of the German cDNA consortium.</title>
        <authorList>
            <person name="Bechtel S."/>
            <person name="Rosenfelder H."/>
            <person name="Duda A."/>
            <person name="Schmidt C.P."/>
            <person name="Ernst U."/>
            <person name="Wellenreuther R."/>
            <person name="Mehrle A."/>
            <person name="Schuster C."/>
            <person name="Bahr A."/>
            <person name="Bloecker H."/>
            <person name="Heubner D."/>
            <person name="Hoerlein A."/>
            <person name="Michel G."/>
            <person name="Wedler H."/>
            <person name="Koehrer K."/>
            <person name="Ottenwaelder B."/>
            <person name="Poustka A."/>
            <person name="Wiemann S."/>
            <person name="Schupp I."/>
        </authorList>
    </citation>
    <scope>NUCLEOTIDE SEQUENCE [LARGE SCALE MRNA] OF 89-604 (ISOFORMS 1/2/3/4)</scope>
    <source>
        <tissue>Fetal brain</tissue>
    </source>
</reference>
<reference key="8">
    <citation type="journal article" date="2013" name="Cell. Mol. Life Sci.">
        <title>Novel activity of KRAB domain that functions to reinforce nuclear localization of KRAB-containing zinc finger proteins by interacting with KAP1.</title>
        <authorList>
            <person name="Wang W."/>
            <person name="Cai J."/>
            <person name="Wu Y."/>
            <person name="Hu L."/>
            <person name="Chen Z."/>
            <person name="Hu J."/>
            <person name="Chen Z."/>
            <person name="Li W."/>
            <person name="Guo M."/>
            <person name="Huang Z."/>
        </authorList>
    </citation>
    <scope>INTERACTION WITH ZNF268</scope>
    <scope>SUBCELLULAR LOCATION</scope>
</reference>
<protein>
    <recommendedName>
        <fullName>Zinc finger protein 300</fullName>
    </recommendedName>
</protein>
<feature type="chain" id="PRO_0000047521" description="Zinc finger protein 300">
    <location>
        <begin position="1"/>
        <end position="604"/>
    </location>
</feature>
<feature type="domain" description="KRAB" evidence="2">
    <location>
        <begin position="8"/>
        <end position="79"/>
    </location>
</feature>
<feature type="zinc finger region" description="C2H2-type 1" evidence="1">
    <location>
        <begin position="269"/>
        <end position="291"/>
    </location>
</feature>
<feature type="zinc finger region" description="C2H2-type 2" evidence="1">
    <location>
        <begin position="297"/>
        <end position="319"/>
    </location>
</feature>
<feature type="zinc finger region" description="C2H2-type 3" evidence="1">
    <location>
        <begin position="325"/>
        <end position="347"/>
    </location>
</feature>
<feature type="zinc finger region" description="C2H2-type 4" evidence="1">
    <location>
        <begin position="353"/>
        <end position="375"/>
    </location>
</feature>
<feature type="zinc finger region" description="C2H2-type 5" evidence="1">
    <location>
        <begin position="381"/>
        <end position="403"/>
    </location>
</feature>
<feature type="zinc finger region" description="C2H2-type 6" evidence="1">
    <location>
        <begin position="409"/>
        <end position="431"/>
    </location>
</feature>
<feature type="zinc finger region" description="C2H2-type 7" evidence="1">
    <location>
        <begin position="437"/>
        <end position="459"/>
    </location>
</feature>
<feature type="zinc finger region" description="C2H2-type 8" evidence="1">
    <location>
        <begin position="465"/>
        <end position="487"/>
    </location>
</feature>
<feature type="zinc finger region" description="C2H2-type 9" evidence="1">
    <location>
        <begin position="493"/>
        <end position="515"/>
    </location>
</feature>
<feature type="zinc finger region" description="C2H2-type 10" evidence="1">
    <location>
        <begin position="521"/>
        <end position="543"/>
    </location>
</feature>
<feature type="zinc finger region" description="C2H2-type 11" evidence="1">
    <location>
        <begin position="549"/>
        <end position="571"/>
    </location>
</feature>
<feature type="zinc finger region" description="C2H2-type 12" evidence="1">
    <location>
        <begin position="577"/>
        <end position="599"/>
    </location>
</feature>
<feature type="region of interest" description="Disordered" evidence="3">
    <location>
        <begin position="203"/>
        <end position="234"/>
    </location>
</feature>
<feature type="splice variant" id="VSP_047506" description="In isoform 4." evidence="7">
    <location>
        <begin position="1"/>
        <end position="36"/>
    </location>
</feature>
<feature type="splice variant" id="VSP_036830" description="In isoform 2." evidence="8">
    <original>M</original>
    <variation>MVPAETSSSGLLEEQK</variation>
    <location>
        <position position="1"/>
    </location>
</feature>
<feature type="splice variant" id="VSP_036831" description="In isoform 3." evidence="7">
    <original>M</original>
    <variation>MVPAETSSSGLLEEQKM</variation>
    <location>
        <position position="1"/>
    </location>
</feature>
<feature type="sequence variant" id="VAR_012355" description="In dbSNP:rs1988688.">
    <original>Q</original>
    <variation>H</variation>
    <location>
        <position position="336"/>
    </location>
</feature>
<feature type="sequence conflict" description="In Ref. 7; CAI46270." evidence="9" ref="7">
    <original>T</original>
    <variation>I</variation>
    <location>
        <position position="253"/>
    </location>
</feature>
<feature type="sequence conflict" description="In Ref. 7; CAI46270." evidence="9" ref="7">
    <original>H</original>
    <variation>Q</variation>
    <location>
        <position position="535"/>
    </location>
</feature>
<organism>
    <name type="scientific">Homo sapiens</name>
    <name type="common">Human</name>
    <dbReference type="NCBI Taxonomy" id="9606"/>
    <lineage>
        <taxon>Eukaryota</taxon>
        <taxon>Metazoa</taxon>
        <taxon>Chordata</taxon>
        <taxon>Craniata</taxon>
        <taxon>Vertebrata</taxon>
        <taxon>Euteleostomi</taxon>
        <taxon>Mammalia</taxon>
        <taxon>Eutheria</taxon>
        <taxon>Euarchontoglires</taxon>
        <taxon>Primates</taxon>
        <taxon>Haplorrhini</taxon>
        <taxon>Catarrhini</taxon>
        <taxon>Hominidae</taxon>
        <taxon>Homo</taxon>
    </lineage>
</organism>
<name>ZN300_HUMAN</name>
<keyword id="KW-0025">Alternative splicing</keyword>
<keyword id="KW-0238">DNA-binding</keyword>
<keyword id="KW-0479">Metal-binding</keyword>
<keyword id="KW-0539">Nucleus</keyword>
<keyword id="KW-1267">Proteomics identification</keyword>
<keyword id="KW-1185">Reference proteome</keyword>
<keyword id="KW-0677">Repeat</keyword>
<keyword id="KW-0678">Repressor</keyword>
<keyword id="KW-0804">Transcription</keyword>
<keyword id="KW-0805">Transcription regulation</keyword>
<keyword id="KW-0862">Zinc</keyword>
<keyword id="KW-0863">Zinc-finger</keyword>
<accession>Q96RE9</accession>
<accession>A8MY91</accession>
<accession>B3KU35</accession>
<accession>B4DU78</accession>
<accession>F5GWS1</accession>
<accession>Q06DQ3</accession>
<accession>Q17RP3</accession>
<accession>Q5H9N5</accession>
<dbReference type="EMBL" id="AF395541">
    <property type="protein sequence ID" value="AAK83888.1"/>
    <property type="molecule type" value="mRNA"/>
</dbReference>
<dbReference type="EMBL" id="DQ908918">
    <property type="protein sequence ID" value="ABI81769.1"/>
    <property type="molecule type" value="mRNA"/>
</dbReference>
<dbReference type="EMBL" id="AK096465">
    <property type="protein sequence ID" value="BAG53297.1"/>
    <property type="molecule type" value="mRNA"/>
</dbReference>
<dbReference type="EMBL" id="AK300528">
    <property type="protein sequence ID" value="BAG62240.1"/>
    <property type="molecule type" value="mRNA"/>
</dbReference>
<dbReference type="EMBL" id="DB094933">
    <property type="status" value="NOT_ANNOTATED_CDS"/>
    <property type="molecule type" value="mRNA"/>
</dbReference>
<dbReference type="EMBL" id="AC010441">
    <property type="status" value="NOT_ANNOTATED_CDS"/>
    <property type="molecule type" value="Genomic_DNA"/>
</dbReference>
<dbReference type="EMBL" id="CH471062">
    <property type="protein sequence ID" value="EAW61702.1"/>
    <property type="status" value="ALT_SEQ"/>
    <property type="molecule type" value="Genomic_DNA"/>
</dbReference>
<dbReference type="EMBL" id="BC117248">
    <property type="protein sequence ID" value="AAI17249.1"/>
    <property type="molecule type" value="mRNA"/>
</dbReference>
<dbReference type="EMBL" id="CR933727">
    <property type="protein sequence ID" value="CAI46270.1"/>
    <property type="molecule type" value="mRNA"/>
</dbReference>
<dbReference type="CCDS" id="CCDS4311.2">
    <molecule id="Q96RE9-1"/>
</dbReference>
<dbReference type="CCDS" id="CCDS54939.1">
    <molecule id="Q96RE9-4"/>
</dbReference>
<dbReference type="CCDS" id="CCDS54940.1">
    <molecule id="Q96RE9-3"/>
</dbReference>
<dbReference type="RefSeq" id="NP_001166302.1">
    <molecule id="Q96RE9-3"/>
    <property type="nucleotide sequence ID" value="NM_001172831.3"/>
</dbReference>
<dbReference type="RefSeq" id="NP_001166303.1">
    <molecule id="Q96RE9-4"/>
    <property type="nucleotide sequence ID" value="NM_001172832.3"/>
</dbReference>
<dbReference type="RefSeq" id="NP_443092.1">
    <molecule id="Q96RE9-1"/>
    <property type="nucleotide sequence ID" value="NM_052860.4"/>
</dbReference>
<dbReference type="SMR" id="Q96RE9"/>
<dbReference type="BioGRID" id="124898">
    <property type="interactions" value="6"/>
</dbReference>
<dbReference type="FunCoup" id="Q96RE9">
    <property type="interactions" value="1254"/>
</dbReference>
<dbReference type="IntAct" id="Q96RE9">
    <property type="interactions" value="5"/>
</dbReference>
<dbReference type="MINT" id="Q96RE9"/>
<dbReference type="STRING" id="9606.ENSP00000397178"/>
<dbReference type="iPTMnet" id="Q96RE9"/>
<dbReference type="PhosphoSitePlus" id="Q96RE9"/>
<dbReference type="BioMuta" id="ZNF300"/>
<dbReference type="DMDM" id="20141015"/>
<dbReference type="jPOST" id="Q96RE9"/>
<dbReference type="MassIVE" id="Q96RE9"/>
<dbReference type="PaxDb" id="9606-ENSP00000397178"/>
<dbReference type="PeptideAtlas" id="Q96RE9"/>
<dbReference type="ProteomicsDB" id="24200"/>
<dbReference type="ProteomicsDB" id="77954">
    <molecule id="Q96RE9-1"/>
</dbReference>
<dbReference type="ProteomicsDB" id="77955">
    <molecule id="Q96RE9-2"/>
</dbReference>
<dbReference type="ProteomicsDB" id="77956">
    <molecule id="Q96RE9-3"/>
</dbReference>
<dbReference type="Antibodypedia" id="28103">
    <property type="antibodies" value="110 antibodies from 17 providers"/>
</dbReference>
<dbReference type="DNASU" id="91975"/>
<dbReference type="Ensembl" id="ENST00000274599.10">
    <molecule id="Q96RE9-1"/>
    <property type="protein sequence ID" value="ENSP00000274599.5"/>
    <property type="gene ID" value="ENSG00000145908.14"/>
</dbReference>
<dbReference type="Ensembl" id="ENST00000446148.7">
    <molecule id="Q96RE9-1"/>
    <property type="protein sequence ID" value="ENSP00000397178.3"/>
    <property type="gene ID" value="ENSG00000145908.14"/>
</dbReference>
<dbReference type="GeneID" id="91975"/>
<dbReference type="KEGG" id="hsa:91975"/>
<dbReference type="MANE-Select" id="ENST00000274599.10">
    <property type="protein sequence ID" value="ENSP00000274599.5"/>
    <property type="RefSeq nucleotide sequence ID" value="NM_052860.4"/>
    <property type="RefSeq protein sequence ID" value="NP_443092.1"/>
</dbReference>
<dbReference type="UCSC" id="uc021yfx.1">
    <molecule id="Q96RE9-1"/>
    <property type="organism name" value="human"/>
</dbReference>
<dbReference type="AGR" id="HGNC:13091"/>
<dbReference type="CTD" id="91975"/>
<dbReference type="DisGeNET" id="91975"/>
<dbReference type="GeneCards" id="ZNF300"/>
<dbReference type="HGNC" id="HGNC:13091">
    <property type="gene designation" value="ZNF300"/>
</dbReference>
<dbReference type="HPA" id="ENSG00000145908">
    <property type="expression patterns" value="Low tissue specificity"/>
</dbReference>
<dbReference type="MIM" id="612429">
    <property type="type" value="gene"/>
</dbReference>
<dbReference type="neXtProt" id="NX_Q96RE9"/>
<dbReference type="OpenTargets" id="ENSG00000145908"/>
<dbReference type="PharmGKB" id="PA37666"/>
<dbReference type="VEuPathDB" id="HostDB:ENSG00000145908"/>
<dbReference type="eggNOG" id="KOG1721">
    <property type="taxonomic scope" value="Eukaryota"/>
</dbReference>
<dbReference type="GeneTree" id="ENSGT00940000162678"/>
<dbReference type="HOGENOM" id="CLU_002678_44_5_1"/>
<dbReference type="InParanoid" id="Q96RE9"/>
<dbReference type="OMA" id="CNDNEHG"/>
<dbReference type="OrthoDB" id="9411774at2759"/>
<dbReference type="PAN-GO" id="Q96RE9">
    <property type="GO annotations" value="4 GO annotations based on evolutionary models"/>
</dbReference>
<dbReference type="PhylomeDB" id="Q96RE9"/>
<dbReference type="PathwayCommons" id="Q96RE9"/>
<dbReference type="Reactome" id="R-HSA-212436">
    <property type="pathway name" value="Generic Transcription Pathway"/>
</dbReference>
<dbReference type="SignaLink" id="Q96RE9"/>
<dbReference type="BioGRID-ORCS" id="91975">
    <property type="hits" value="13 hits in 1176 CRISPR screens"/>
</dbReference>
<dbReference type="GeneWiki" id="ZNF300"/>
<dbReference type="GenomeRNAi" id="91975"/>
<dbReference type="Pharos" id="Q96RE9">
    <property type="development level" value="Tbio"/>
</dbReference>
<dbReference type="PRO" id="PR:Q96RE9"/>
<dbReference type="Proteomes" id="UP000005640">
    <property type="component" value="Chromosome 5"/>
</dbReference>
<dbReference type="RNAct" id="Q96RE9">
    <property type="molecule type" value="protein"/>
</dbReference>
<dbReference type="Bgee" id="ENSG00000145908">
    <property type="expression patterns" value="Expressed in cortical plate and 123 other cell types or tissues"/>
</dbReference>
<dbReference type="ExpressionAtlas" id="Q96RE9">
    <property type="expression patterns" value="baseline and differential"/>
</dbReference>
<dbReference type="GO" id="GO:0016604">
    <property type="term" value="C:nuclear body"/>
    <property type="evidence" value="ECO:0000314"/>
    <property type="project" value="HPA"/>
</dbReference>
<dbReference type="GO" id="GO:0005730">
    <property type="term" value="C:nucleolus"/>
    <property type="evidence" value="ECO:0000314"/>
    <property type="project" value="HPA"/>
</dbReference>
<dbReference type="GO" id="GO:0005654">
    <property type="term" value="C:nucleoplasm"/>
    <property type="evidence" value="ECO:0000314"/>
    <property type="project" value="HPA"/>
</dbReference>
<dbReference type="GO" id="GO:0005634">
    <property type="term" value="C:nucleus"/>
    <property type="evidence" value="ECO:0000314"/>
    <property type="project" value="UniProtKB"/>
</dbReference>
<dbReference type="GO" id="GO:0001228">
    <property type="term" value="F:DNA-binding transcription activator activity, RNA polymerase II-specific"/>
    <property type="evidence" value="ECO:0000314"/>
    <property type="project" value="NTNU_SB"/>
</dbReference>
<dbReference type="GO" id="GO:0000981">
    <property type="term" value="F:DNA-binding transcription factor activity, RNA polymerase II-specific"/>
    <property type="evidence" value="ECO:0000318"/>
    <property type="project" value="GO_Central"/>
</dbReference>
<dbReference type="GO" id="GO:0000978">
    <property type="term" value="F:RNA polymerase II cis-regulatory region sequence-specific DNA binding"/>
    <property type="evidence" value="ECO:0000318"/>
    <property type="project" value="GO_Central"/>
</dbReference>
<dbReference type="GO" id="GO:0043565">
    <property type="term" value="F:sequence-specific DNA binding"/>
    <property type="evidence" value="ECO:0000314"/>
    <property type="project" value="NTNU_SB"/>
</dbReference>
<dbReference type="GO" id="GO:0008270">
    <property type="term" value="F:zinc ion binding"/>
    <property type="evidence" value="ECO:0007669"/>
    <property type="project" value="UniProtKB-KW"/>
</dbReference>
<dbReference type="GO" id="GO:0045944">
    <property type="term" value="P:positive regulation of transcription by RNA polymerase II"/>
    <property type="evidence" value="ECO:0000314"/>
    <property type="project" value="NTNU_SB"/>
</dbReference>
<dbReference type="GO" id="GO:0006357">
    <property type="term" value="P:regulation of transcription by RNA polymerase II"/>
    <property type="evidence" value="ECO:0000318"/>
    <property type="project" value="GO_Central"/>
</dbReference>
<dbReference type="CDD" id="cd07765">
    <property type="entry name" value="KRAB_A-box"/>
    <property type="match status" value="1"/>
</dbReference>
<dbReference type="FunFam" id="3.30.160.60:FF:000029">
    <property type="entry name" value="GLI family zinc finger 4"/>
    <property type="match status" value="1"/>
</dbReference>
<dbReference type="FunFam" id="3.30.160.60:FF:000824">
    <property type="entry name" value="Zinc finger protein 184"/>
    <property type="match status" value="1"/>
</dbReference>
<dbReference type="FunFam" id="3.30.160.60:FF:000295">
    <property type="entry name" value="zinc finger protein 19"/>
    <property type="match status" value="2"/>
</dbReference>
<dbReference type="FunFam" id="3.30.160.60:FF:000622">
    <property type="entry name" value="zinc finger protein 26 isoform X3"/>
    <property type="match status" value="1"/>
</dbReference>
<dbReference type="FunFam" id="3.30.160.60:FF:001530">
    <property type="entry name" value="Zinc finger protein 268"/>
    <property type="match status" value="1"/>
</dbReference>
<dbReference type="FunFam" id="3.30.160.60:FF:001938">
    <property type="entry name" value="Zinc finger protein 300"/>
    <property type="match status" value="1"/>
</dbReference>
<dbReference type="FunFam" id="3.30.160.60:FF:002343">
    <property type="entry name" value="Zinc finger protein 33A"/>
    <property type="match status" value="2"/>
</dbReference>
<dbReference type="FunFam" id="3.30.160.60:FF:002090">
    <property type="entry name" value="Zinc finger protein 473"/>
    <property type="match status" value="1"/>
</dbReference>
<dbReference type="FunFam" id="3.30.160.60:FF:000200">
    <property type="entry name" value="zinc finger protein 510 isoform X2"/>
    <property type="match status" value="1"/>
</dbReference>
<dbReference type="FunFam" id="3.30.160.60:FF:000754">
    <property type="entry name" value="Zinc finger protein 585A"/>
    <property type="match status" value="1"/>
</dbReference>
<dbReference type="Gene3D" id="6.10.140.140">
    <property type="match status" value="1"/>
</dbReference>
<dbReference type="Gene3D" id="3.30.160.60">
    <property type="entry name" value="Classic Zinc Finger"/>
    <property type="match status" value="12"/>
</dbReference>
<dbReference type="InterPro" id="IPR001909">
    <property type="entry name" value="KRAB"/>
</dbReference>
<dbReference type="InterPro" id="IPR036051">
    <property type="entry name" value="KRAB_dom_sf"/>
</dbReference>
<dbReference type="InterPro" id="IPR050331">
    <property type="entry name" value="Zinc_finger"/>
</dbReference>
<dbReference type="InterPro" id="IPR036236">
    <property type="entry name" value="Znf_C2H2_sf"/>
</dbReference>
<dbReference type="InterPro" id="IPR013087">
    <property type="entry name" value="Znf_C2H2_type"/>
</dbReference>
<dbReference type="PANTHER" id="PTHR16515">
    <property type="entry name" value="PR DOMAIN ZINC FINGER PROTEIN"/>
    <property type="match status" value="1"/>
</dbReference>
<dbReference type="PANTHER" id="PTHR16515:SF51">
    <property type="entry name" value="ZINC FINGER PROTEIN 833-RELATED"/>
    <property type="match status" value="1"/>
</dbReference>
<dbReference type="Pfam" id="PF01352">
    <property type="entry name" value="KRAB"/>
    <property type="match status" value="1"/>
</dbReference>
<dbReference type="Pfam" id="PF00096">
    <property type="entry name" value="zf-C2H2"/>
    <property type="match status" value="12"/>
</dbReference>
<dbReference type="SMART" id="SM00349">
    <property type="entry name" value="KRAB"/>
    <property type="match status" value="1"/>
</dbReference>
<dbReference type="SMART" id="SM00355">
    <property type="entry name" value="ZnF_C2H2"/>
    <property type="match status" value="12"/>
</dbReference>
<dbReference type="SUPFAM" id="SSF57667">
    <property type="entry name" value="beta-beta-alpha zinc fingers"/>
    <property type="match status" value="7"/>
</dbReference>
<dbReference type="SUPFAM" id="SSF109640">
    <property type="entry name" value="KRAB domain (Kruppel-associated box)"/>
    <property type="match status" value="1"/>
</dbReference>
<dbReference type="PROSITE" id="PS50805">
    <property type="entry name" value="KRAB"/>
    <property type="match status" value="1"/>
</dbReference>
<dbReference type="PROSITE" id="PS00028">
    <property type="entry name" value="ZINC_FINGER_C2H2_1"/>
    <property type="match status" value="12"/>
</dbReference>
<dbReference type="PROSITE" id="PS50157">
    <property type="entry name" value="ZINC_FINGER_C2H2_2"/>
    <property type="match status" value="12"/>
</dbReference>
<sequence length="604" mass="68743">MMKSQGLVSFKDVAVDFTQEEWQQLDPSQRTLYRDVMLENYSHLVSMGYPVSKPDVISKLEQGEEPWIIKGDISNWIYPDEYQADGRQDRKSNLHNSQSCILGTVSFHHKILKGVTRDGSLCSILKVCQGDGQLQRFLENQDKLFRQVTFVNSKTVTEASGHKYNPLGKIFQECIETDISIQRFHKYDAFKKNLKPNIDLPSCYKSNSRKKPDQSFGGGKSSSQSEPNSNLEKIHNGVIPFDDNQCGNVFRNTQSLIQYQNVETKEKSCVCVTCGKAFAKKSQLIVHQRIHTGKKPYDCGACGKAFSEKFHLVVHQRTHTGEKPYDCSECGKAFSQKSSLIIHQRVHTGEKPYECSECGKAFSQKSPLIIHQRIHTGEKPYECRECGKAFSQKSQLIIHHRAHTGEKPYECTECGKAFCEKSHLIIHKRIHTGEKPYKCAQCEEAFSRKTELITHQLVHTGEKPYECTECGKTFSRKSQLIIHQRTHTGEKPYKCSECGKAFCQKSHLIGHQRIHTGEKPYICTECGKAFSQKSHLPGHQRIHTGEKPYICAECGKAFSQKSDLVLHQRIHTGERPYQCAICGKAFIQKSQLTVHQRIHTVVKS</sequence>
<proteinExistence type="evidence at protein level"/>
<comment type="function">
    <text evidence="4">Has a transcriptional repressor activity.</text>
</comment>
<comment type="subunit">
    <text evidence="6">Interacts (via the KRAB domain) with TRIM28 (via the RBCC domain).</text>
</comment>
<comment type="interaction">
    <interactant intactId="EBI-12902696">
        <id>Q96RE9-3</id>
    </interactant>
    <interactant intactId="EBI-750671">
        <id>Q15699</id>
        <label>ALX1</label>
    </interactant>
    <organismsDiffer>false</organismsDiffer>
    <experiments>3</experiments>
</comment>
<comment type="subcellular location">
    <subcellularLocation>
        <location evidence="4 6">Nucleus</location>
    </subcellularLocation>
</comment>
<comment type="alternative products">
    <event type="alternative splicing"/>
    <isoform>
        <id>Q96RE9-1</id>
        <name>1</name>
        <sequence type="displayed"/>
    </isoform>
    <isoform>
        <id>Q96RE9-2</id>
        <name>2</name>
        <name>Zinc finger protein 300-B</name>
        <name>ZNF300B</name>
        <sequence type="described" ref="VSP_036830"/>
    </isoform>
    <isoform>
        <id>Q96RE9-3</id>
        <name>3</name>
        <sequence type="described" ref="VSP_036831"/>
    </isoform>
    <isoform>
        <id>Q96RE9-4</id>
        <name>4</name>
        <sequence type="described" ref="VSP_047506"/>
    </isoform>
</comment>
<comment type="tissue specificity">
    <text evidence="4 5">Expressed mostly in heart, skeletal muscle and brain. Isoform 1 and isoform 2 are highly expressed in testis.</text>
</comment>
<comment type="similarity">
    <text evidence="9">Belongs to the krueppel C2H2-type zinc-finger protein family.</text>
</comment>
<comment type="sequence caution" evidence="9">
    <conflict type="erroneous gene model prediction">
        <sequence resource="EMBL-CDS" id="EAW61702"/>
    </conflict>
</comment>
<gene>
    <name type="primary">ZNF300</name>
</gene>